<reference key="1">
    <citation type="journal article" date="1998" name="Nature">
        <title>The complete genome of the hyperthermophilic bacterium Aquifex aeolicus.</title>
        <authorList>
            <person name="Deckert G."/>
            <person name="Warren P.V."/>
            <person name="Gaasterland T."/>
            <person name="Young W.G."/>
            <person name="Lenox A.L."/>
            <person name="Graham D.E."/>
            <person name="Overbeek R."/>
            <person name="Snead M.A."/>
            <person name="Keller M."/>
            <person name="Aujay M."/>
            <person name="Huber R."/>
            <person name="Feldman R.A."/>
            <person name="Short J.M."/>
            <person name="Olsen G.J."/>
            <person name="Swanson R.V."/>
        </authorList>
    </citation>
    <scope>NUCLEOTIDE SEQUENCE [LARGE SCALE GENOMIC DNA]</scope>
    <source>
        <strain>VF5</strain>
    </source>
</reference>
<accession>O67660</accession>
<dbReference type="EMBL" id="AE000657">
    <property type="protein sequence ID" value="AAC07624.1"/>
    <property type="molecule type" value="Genomic_DNA"/>
</dbReference>
<dbReference type="PIR" id="B70454">
    <property type="entry name" value="B70454"/>
</dbReference>
<dbReference type="RefSeq" id="NP_214226.1">
    <property type="nucleotide sequence ID" value="NC_000918.1"/>
</dbReference>
<dbReference type="RefSeq" id="WP_010881163.1">
    <property type="nucleotide sequence ID" value="NC_000918.1"/>
</dbReference>
<dbReference type="SMR" id="O67660"/>
<dbReference type="STRING" id="224324.aq_1791"/>
<dbReference type="EnsemblBacteria" id="AAC07624">
    <property type="protein sequence ID" value="AAC07624"/>
    <property type="gene ID" value="aq_1791"/>
</dbReference>
<dbReference type="KEGG" id="aae:aq_1791"/>
<dbReference type="eggNOG" id="ENOG5033KQI">
    <property type="taxonomic scope" value="Bacteria"/>
</dbReference>
<dbReference type="HOGENOM" id="CLU_1965997_0_0_0"/>
<dbReference type="InParanoid" id="O67660"/>
<dbReference type="OrthoDB" id="15495at2"/>
<dbReference type="Proteomes" id="UP000000798">
    <property type="component" value="Chromosome"/>
</dbReference>
<gene>
    <name type="ordered locus">aq_1791</name>
</gene>
<sequence length="127" mass="15517">MELWVKIGDEKKKYQGSFQSVMENLVKDGRGKEIQILCMHAPPRERRRFKRELRWYDKDILKTASAIARWFYLREYRRIRRRIKELKNRAKYISKGEIAYNPKIMKEVEALKEKLSEIEKKIEELKV</sequence>
<feature type="chain" id="PRO_0000186944" description="Uncharacterized protein aq_1791">
    <location>
        <begin position="1"/>
        <end position="127"/>
    </location>
</feature>
<feature type="coiled-coil region" evidence="1">
    <location>
        <begin position="71"/>
        <end position="126"/>
    </location>
</feature>
<evidence type="ECO:0000255" key="1"/>
<protein>
    <recommendedName>
        <fullName>Uncharacterized protein aq_1791</fullName>
    </recommendedName>
</protein>
<organism>
    <name type="scientific">Aquifex aeolicus (strain VF5)</name>
    <dbReference type="NCBI Taxonomy" id="224324"/>
    <lineage>
        <taxon>Bacteria</taxon>
        <taxon>Pseudomonadati</taxon>
        <taxon>Aquificota</taxon>
        <taxon>Aquificia</taxon>
        <taxon>Aquificales</taxon>
        <taxon>Aquificaceae</taxon>
        <taxon>Aquifex</taxon>
    </lineage>
</organism>
<keyword id="KW-0175">Coiled coil</keyword>
<keyword id="KW-1185">Reference proteome</keyword>
<proteinExistence type="predicted"/>
<name>Y1791_AQUAE</name>